<proteinExistence type="inferred from homology"/>
<gene>
    <name evidence="2" type="primary">rpsL</name>
    <name type="ordered locus">EcHS_A3538</name>
</gene>
<keyword id="KW-0007">Acetylation</keyword>
<keyword id="KW-0488">Methylation</keyword>
<keyword id="KW-0687">Ribonucleoprotein</keyword>
<keyword id="KW-0689">Ribosomal protein</keyword>
<keyword id="KW-0694">RNA-binding</keyword>
<keyword id="KW-0699">rRNA-binding</keyword>
<keyword id="KW-0820">tRNA-binding</keyword>
<reference key="1">
    <citation type="journal article" date="2008" name="J. Bacteriol.">
        <title>The pangenome structure of Escherichia coli: comparative genomic analysis of E. coli commensal and pathogenic isolates.</title>
        <authorList>
            <person name="Rasko D.A."/>
            <person name="Rosovitz M.J."/>
            <person name="Myers G.S.A."/>
            <person name="Mongodin E.F."/>
            <person name="Fricke W.F."/>
            <person name="Gajer P."/>
            <person name="Crabtree J."/>
            <person name="Sebaihia M."/>
            <person name="Thomson N.R."/>
            <person name="Chaudhuri R."/>
            <person name="Henderson I.R."/>
            <person name="Sperandio V."/>
            <person name="Ravel J."/>
        </authorList>
    </citation>
    <scope>NUCLEOTIDE SEQUENCE [LARGE SCALE GENOMIC DNA]</scope>
    <source>
        <strain>HS</strain>
    </source>
</reference>
<protein>
    <recommendedName>
        <fullName evidence="2">Small ribosomal subunit protein uS12</fullName>
    </recommendedName>
    <alternativeName>
        <fullName evidence="3">30S ribosomal protein S12</fullName>
    </alternativeName>
</protein>
<feature type="chain" id="PRO_1000060814" description="Small ribosomal subunit protein uS12">
    <location>
        <begin position="1"/>
        <end position="124"/>
    </location>
</feature>
<feature type="modified residue" description="3-methylthioaspartic acid" evidence="1">
    <location>
        <position position="89"/>
    </location>
</feature>
<feature type="modified residue" description="N6-acetyllysine" evidence="2">
    <location>
        <position position="108"/>
    </location>
</feature>
<accession>A8A5E9</accession>
<sequence>MATVNQLVRKPRARKVAKSNVPALEACPQKRGVCTRVYTTTPKKPNSALRKVCRVRLTNGFEVTSYIGGEGHNLQEHSVILIRGGRVKDLPGVRYHTVRGALDCSGVKDRKQARSKYGVKRPKA</sequence>
<name>RS12_ECOHS</name>
<evidence type="ECO:0000250" key="1"/>
<evidence type="ECO:0000255" key="2">
    <source>
        <dbReference type="HAMAP-Rule" id="MF_00403"/>
    </source>
</evidence>
<evidence type="ECO:0000305" key="3"/>
<dbReference type="EMBL" id="CP000802">
    <property type="protein sequence ID" value="ABV07753.1"/>
    <property type="molecule type" value="Genomic_DNA"/>
</dbReference>
<dbReference type="RefSeq" id="WP_000246815.1">
    <property type="nucleotide sequence ID" value="NC_009800.1"/>
</dbReference>
<dbReference type="SMR" id="A8A5E9"/>
<dbReference type="GeneID" id="98390450"/>
<dbReference type="KEGG" id="ecx:EcHS_A3538"/>
<dbReference type="HOGENOM" id="CLU_104295_1_2_6"/>
<dbReference type="GO" id="GO:0015935">
    <property type="term" value="C:small ribosomal subunit"/>
    <property type="evidence" value="ECO:0007669"/>
    <property type="project" value="InterPro"/>
</dbReference>
<dbReference type="GO" id="GO:0019843">
    <property type="term" value="F:rRNA binding"/>
    <property type="evidence" value="ECO:0007669"/>
    <property type="project" value="UniProtKB-UniRule"/>
</dbReference>
<dbReference type="GO" id="GO:0003735">
    <property type="term" value="F:structural constituent of ribosome"/>
    <property type="evidence" value="ECO:0007669"/>
    <property type="project" value="InterPro"/>
</dbReference>
<dbReference type="GO" id="GO:0000049">
    <property type="term" value="F:tRNA binding"/>
    <property type="evidence" value="ECO:0007669"/>
    <property type="project" value="UniProtKB-UniRule"/>
</dbReference>
<dbReference type="GO" id="GO:0006412">
    <property type="term" value="P:translation"/>
    <property type="evidence" value="ECO:0007669"/>
    <property type="project" value="UniProtKB-UniRule"/>
</dbReference>
<dbReference type="CDD" id="cd03368">
    <property type="entry name" value="Ribosomal_S12"/>
    <property type="match status" value="1"/>
</dbReference>
<dbReference type="FunFam" id="2.40.50.140:FF:000001">
    <property type="entry name" value="30S ribosomal protein S12"/>
    <property type="match status" value="1"/>
</dbReference>
<dbReference type="Gene3D" id="2.40.50.140">
    <property type="entry name" value="Nucleic acid-binding proteins"/>
    <property type="match status" value="1"/>
</dbReference>
<dbReference type="HAMAP" id="MF_00403_B">
    <property type="entry name" value="Ribosomal_uS12_B"/>
    <property type="match status" value="1"/>
</dbReference>
<dbReference type="InterPro" id="IPR012340">
    <property type="entry name" value="NA-bd_OB-fold"/>
</dbReference>
<dbReference type="InterPro" id="IPR006032">
    <property type="entry name" value="Ribosomal_uS12"/>
</dbReference>
<dbReference type="InterPro" id="IPR005679">
    <property type="entry name" value="Ribosomal_uS12_bac"/>
</dbReference>
<dbReference type="NCBIfam" id="TIGR00981">
    <property type="entry name" value="rpsL_bact"/>
    <property type="match status" value="1"/>
</dbReference>
<dbReference type="PANTHER" id="PTHR11652">
    <property type="entry name" value="30S RIBOSOMAL PROTEIN S12 FAMILY MEMBER"/>
    <property type="match status" value="1"/>
</dbReference>
<dbReference type="Pfam" id="PF00164">
    <property type="entry name" value="Ribosom_S12_S23"/>
    <property type="match status" value="1"/>
</dbReference>
<dbReference type="PIRSF" id="PIRSF002133">
    <property type="entry name" value="Ribosomal_S12/S23"/>
    <property type="match status" value="1"/>
</dbReference>
<dbReference type="PRINTS" id="PR01034">
    <property type="entry name" value="RIBOSOMALS12"/>
</dbReference>
<dbReference type="SUPFAM" id="SSF50249">
    <property type="entry name" value="Nucleic acid-binding proteins"/>
    <property type="match status" value="1"/>
</dbReference>
<dbReference type="PROSITE" id="PS00055">
    <property type="entry name" value="RIBOSOMAL_S12"/>
    <property type="match status" value="1"/>
</dbReference>
<comment type="function">
    <text evidence="2">With S4 and S5 plays an important role in translational accuracy.</text>
</comment>
<comment type="function">
    <text evidence="2">Interacts with and stabilizes bases of the 16S rRNA that are involved in tRNA selection in the A site and with the mRNA backbone. Located at the interface of the 30S and 50S subunits, it traverses the body of the 30S subunit contacting proteins on the other side and probably holding the rRNA structure together. The combined cluster of proteins S8, S12 and S17 appears to hold together the shoulder and platform of the 30S subunit.</text>
</comment>
<comment type="subunit">
    <text evidence="2">Part of the 30S ribosomal subunit. Contacts proteins S8 and S17. May interact with IF1 in the 30S initiation complex.</text>
</comment>
<comment type="similarity">
    <text evidence="2">Belongs to the universal ribosomal protein uS12 family.</text>
</comment>
<organism>
    <name type="scientific">Escherichia coli O9:H4 (strain HS)</name>
    <dbReference type="NCBI Taxonomy" id="331112"/>
    <lineage>
        <taxon>Bacteria</taxon>
        <taxon>Pseudomonadati</taxon>
        <taxon>Pseudomonadota</taxon>
        <taxon>Gammaproteobacteria</taxon>
        <taxon>Enterobacterales</taxon>
        <taxon>Enterobacteriaceae</taxon>
        <taxon>Escherichia</taxon>
    </lineage>
</organism>